<keyword id="KW-0067">ATP-binding</keyword>
<keyword id="KW-0963">Cytoplasm</keyword>
<keyword id="KW-0418">Kinase</keyword>
<keyword id="KW-0520">NAD</keyword>
<keyword id="KW-0521">NADP</keyword>
<keyword id="KW-0547">Nucleotide-binding</keyword>
<keyword id="KW-1185">Reference proteome</keyword>
<keyword id="KW-0808">Transferase</keyword>
<name>NADK_BURM1</name>
<organism>
    <name type="scientific">Burkholderia multivorans (strain ATCC 17616 / 249)</name>
    <dbReference type="NCBI Taxonomy" id="395019"/>
    <lineage>
        <taxon>Bacteria</taxon>
        <taxon>Pseudomonadati</taxon>
        <taxon>Pseudomonadota</taxon>
        <taxon>Betaproteobacteria</taxon>
        <taxon>Burkholderiales</taxon>
        <taxon>Burkholderiaceae</taxon>
        <taxon>Burkholderia</taxon>
        <taxon>Burkholderia cepacia complex</taxon>
    </lineage>
</organism>
<reference key="1">
    <citation type="submission" date="2007-10" db="EMBL/GenBank/DDBJ databases">
        <title>Complete sequence of chromosome 1 of Burkholderia multivorans ATCC 17616.</title>
        <authorList>
            <person name="Copeland A."/>
            <person name="Lucas S."/>
            <person name="Lapidus A."/>
            <person name="Barry K."/>
            <person name="Glavina del Rio T."/>
            <person name="Dalin E."/>
            <person name="Tice H."/>
            <person name="Pitluck S."/>
            <person name="Chain P."/>
            <person name="Malfatti S."/>
            <person name="Shin M."/>
            <person name="Vergez L."/>
            <person name="Schmutz J."/>
            <person name="Larimer F."/>
            <person name="Land M."/>
            <person name="Hauser L."/>
            <person name="Kyrpides N."/>
            <person name="Kim E."/>
            <person name="Tiedje J."/>
            <person name="Richardson P."/>
        </authorList>
    </citation>
    <scope>NUCLEOTIDE SEQUENCE [LARGE SCALE GENOMIC DNA]</scope>
    <source>
        <strain>ATCC 17616 / 249</strain>
    </source>
</reference>
<reference key="2">
    <citation type="submission" date="2007-04" db="EMBL/GenBank/DDBJ databases">
        <title>Complete genome sequence of Burkholderia multivorans ATCC 17616.</title>
        <authorList>
            <person name="Ohtsubo Y."/>
            <person name="Yamashita A."/>
            <person name="Kurokawa K."/>
            <person name="Takami H."/>
            <person name="Yuhara S."/>
            <person name="Nishiyama E."/>
            <person name="Endo R."/>
            <person name="Miyazaki R."/>
            <person name="Ono A."/>
            <person name="Yano K."/>
            <person name="Ito M."/>
            <person name="Sota M."/>
            <person name="Yuji N."/>
            <person name="Hattori M."/>
            <person name="Tsuda M."/>
        </authorList>
    </citation>
    <scope>NUCLEOTIDE SEQUENCE [LARGE SCALE GENOMIC DNA]</scope>
    <source>
        <strain>ATCC 17616 / 249</strain>
    </source>
</reference>
<comment type="function">
    <text evidence="1">Involved in the regulation of the intracellular balance of NAD and NADP, and is a key enzyme in the biosynthesis of NADP. Catalyzes specifically the phosphorylation on 2'-hydroxyl of the adenosine moiety of NAD to yield NADP.</text>
</comment>
<comment type="catalytic activity">
    <reaction evidence="1">
        <text>NAD(+) + ATP = ADP + NADP(+) + H(+)</text>
        <dbReference type="Rhea" id="RHEA:18629"/>
        <dbReference type="ChEBI" id="CHEBI:15378"/>
        <dbReference type="ChEBI" id="CHEBI:30616"/>
        <dbReference type="ChEBI" id="CHEBI:57540"/>
        <dbReference type="ChEBI" id="CHEBI:58349"/>
        <dbReference type="ChEBI" id="CHEBI:456216"/>
        <dbReference type="EC" id="2.7.1.23"/>
    </reaction>
</comment>
<comment type="cofactor">
    <cofactor evidence="1">
        <name>a divalent metal cation</name>
        <dbReference type="ChEBI" id="CHEBI:60240"/>
    </cofactor>
</comment>
<comment type="subcellular location">
    <subcellularLocation>
        <location evidence="1">Cytoplasm</location>
    </subcellularLocation>
</comment>
<comment type="similarity">
    <text evidence="1">Belongs to the NAD kinase family.</text>
</comment>
<dbReference type="EC" id="2.7.1.23" evidence="1"/>
<dbReference type="EMBL" id="CP000868">
    <property type="protein sequence ID" value="ABX16324.1"/>
    <property type="molecule type" value="Genomic_DNA"/>
</dbReference>
<dbReference type="EMBL" id="AP009385">
    <property type="protein sequence ID" value="BAG42562.1"/>
    <property type="molecule type" value="Genomic_DNA"/>
</dbReference>
<dbReference type="RefSeq" id="WP_006409161.1">
    <property type="nucleotide sequence ID" value="NC_010804.1"/>
</dbReference>
<dbReference type="SMR" id="A9AGC5"/>
<dbReference type="STRING" id="395019.BMULJ_00598"/>
<dbReference type="KEGG" id="bmj:BMULJ_00598"/>
<dbReference type="KEGG" id="bmu:Bmul_2640"/>
<dbReference type="eggNOG" id="COG0061">
    <property type="taxonomic scope" value="Bacteria"/>
</dbReference>
<dbReference type="HOGENOM" id="CLU_008831_0_1_4"/>
<dbReference type="Proteomes" id="UP000008815">
    <property type="component" value="Chromosome 1"/>
</dbReference>
<dbReference type="GO" id="GO:0005737">
    <property type="term" value="C:cytoplasm"/>
    <property type="evidence" value="ECO:0007669"/>
    <property type="project" value="UniProtKB-SubCell"/>
</dbReference>
<dbReference type="GO" id="GO:0005524">
    <property type="term" value="F:ATP binding"/>
    <property type="evidence" value="ECO:0007669"/>
    <property type="project" value="UniProtKB-KW"/>
</dbReference>
<dbReference type="GO" id="GO:0046872">
    <property type="term" value="F:metal ion binding"/>
    <property type="evidence" value="ECO:0007669"/>
    <property type="project" value="UniProtKB-UniRule"/>
</dbReference>
<dbReference type="GO" id="GO:0051287">
    <property type="term" value="F:NAD binding"/>
    <property type="evidence" value="ECO:0007669"/>
    <property type="project" value="UniProtKB-ARBA"/>
</dbReference>
<dbReference type="GO" id="GO:0003951">
    <property type="term" value="F:NAD+ kinase activity"/>
    <property type="evidence" value="ECO:0007669"/>
    <property type="project" value="UniProtKB-UniRule"/>
</dbReference>
<dbReference type="GO" id="GO:0019674">
    <property type="term" value="P:NAD metabolic process"/>
    <property type="evidence" value="ECO:0007669"/>
    <property type="project" value="InterPro"/>
</dbReference>
<dbReference type="GO" id="GO:0006741">
    <property type="term" value="P:NADP biosynthetic process"/>
    <property type="evidence" value="ECO:0007669"/>
    <property type="project" value="UniProtKB-UniRule"/>
</dbReference>
<dbReference type="Gene3D" id="3.40.50.10330">
    <property type="entry name" value="Probable inorganic polyphosphate/atp-NAD kinase, domain 1"/>
    <property type="match status" value="1"/>
</dbReference>
<dbReference type="Gene3D" id="2.60.200.30">
    <property type="entry name" value="Probable inorganic polyphosphate/atp-NAD kinase, domain 2"/>
    <property type="match status" value="1"/>
</dbReference>
<dbReference type="HAMAP" id="MF_00361">
    <property type="entry name" value="NAD_kinase"/>
    <property type="match status" value="1"/>
</dbReference>
<dbReference type="InterPro" id="IPR017438">
    <property type="entry name" value="ATP-NAD_kinase_N"/>
</dbReference>
<dbReference type="InterPro" id="IPR017437">
    <property type="entry name" value="ATP-NAD_kinase_PpnK-typ_C"/>
</dbReference>
<dbReference type="InterPro" id="IPR016064">
    <property type="entry name" value="NAD/diacylglycerol_kinase_sf"/>
</dbReference>
<dbReference type="InterPro" id="IPR002504">
    <property type="entry name" value="NADK"/>
</dbReference>
<dbReference type="NCBIfam" id="NF002561">
    <property type="entry name" value="PRK02155.1"/>
    <property type="match status" value="1"/>
</dbReference>
<dbReference type="PANTHER" id="PTHR20275">
    <property type="entry name" value="NAD KINASE"/>
    <property type="match status" value="1"/>
</dbReference>
<dbReference type="PANTHER" id="PTHR20275:SF0">
    <property type="entry name" value="NAD KINASE"/>
    <property type="match status" value="1"/>
</dbReference>
<dbReference type="Pfam" id="PF01513">
    <property type="entry name" value="NAD_kinase"/>
    <property type="match status" value="1"/>
</dbReference>
<dbReference type="Pfam" id="PF20143">
    <property type="entry name" value="NAD_kinase_C"/>
    <property type="match status" value="1"/>
</dbReference>
<dbReference type="SUPFAM" id="SSF111331">
    <property type="entry name" value="NAD kinase/diacylglycerol kinase-like"/>
    <property type="match status" value="1"/>
</dbReference>
<evidence type="ECO:0000255" key="1">
    <source>
        <dbReference type="HAMAP-Rule" id="MF_00361"/>
    </source>
</evidence>
<sequence length="300" mass="32316">MKTGNLFNTVALVGRSNTPGIAEPLATLAACIAKRGFEVVFEGDTAREIGISGYPALTPAEIGARADVAVVLGGDGTMLGIGRQLAPYRTPLIGINHGRLGFITDIAAADMQALVPVMLSGKFEREERSLLEARIVRDGEPIYHALAFNDVVVNRSGFSGMVELRASVDGRYMYNQRSDGLIVATPTGSTAYALSSAGPILHPQLQGIVLVPIAPHALSNRPIVLPDDSKIAIQIVGGRDVNVNFDMQSFTALELNDTIEVRRSKHTVPFLHPIGYSYYATLRKKLHWNEHASNEDDKAS</sequence>
<protein>
    <recommendedName>
        <fullName evidence="1">NAD kinase</fullName>
        <ecNumber evidence="1">2.7.1.23</ecNumber>
    </recommendedName>
    <alternativeName>
        <fullName evidence="1">ATP-dependent NAD kinase</fullName>
    </alternativeName>
</protein>
<feature type="chain" id="PRO_1000120835" description="NAD kinase">
    <location>
        <begin position="1"/>
        <end position="300"/>
    </location>
</feature>
<feature type="active site" description="Proton acceptor" evidence="1">
    <location>
        <position position="75"/>
    </location>
</feature>
<feature type="binding site" evidence="1">
    <location>
        <begin position="75"/>
        <end position="76"/>
    </location>
    <ligand>
        <name>NAD(+)</name>
        <dbReference type="ChEBI" id="CHEBI:57540"/>
    </ligand>
</feature>
<feature type="binding site" evidence="1">
    <location>
        <begin position="149"/>
        <end position="150"/>
    </location>
    <ligand>
        <name>NAD(+)</name>
        <dbReference type="ChEBI" id="CHEBI:57540"/>
    </ligand>
</feature>
<feature type="binding site" evidence="1">
    <location>
        <position position="177"/>
    </location>
    <ligand>
        <name>NAD(+)</name>
        <dbReference type="ChEBI" id="CHEBI:57540"/>
    </ligand>
</feature>
<feature type="binding site" evidence="1">
    <location>
        <position position="179"/>
    </location>
    <ligand>
        <name>NAD(+)</name>
        <dbReference type="ChEBI" id="CHEBI:57540"/>
    </ligand>
</feature>
<feature type="binding site" evidence="1">
    <location>
        <begin position="190"/>
        <end position="195"/>
    </location>
    <ligand>
        <name>NAD(+)</name>
        <dbReference type="ChEBI" id="CHEBI:57540"/>
    </ligand>
</feature>
<feature type="binding site" evidence="1">
    <location>
        <position position="214"/>
    </location>
    <ligand>
        <name>NAD(+)</name>
        <dbReference type="ChEBI" id="CHEBI:57540"/>
    </ligand>
</feature>
<feature type="binding site" evidence="1">
    <location>
        <position position="248"/>
    </location>
    <ligand>
        <name>NAD(+)</name>
        <dbReference type="ChEBI" id="CHEBI:57540"/>
    </ligand>
</feature>
<accession>A9AGC5</accession>
<gene>
    <name evidence="1" type="primary">nadK</name>
    <name type="ordered locus">Bmul_2640</name>
    <name type="ordered locus">BMULJ_00598</name>
</gene>
<proteinExistence type="inferred from homology"/>